<proteinExistence type="inferred from homology"/>
<gene>
    <name evidence="1" type="primary">rpsR</name>
    <name type="ordered locus">TPASS_0061</name>
</gene>
<feature type="chain" id="PRO_1000114463" description="Small ribosomal subunit protein bS18">
    <location>
        <begin position="1"/>
        <end position="99"/>
    </location>
</feature>
<feature type="region of interest" description="Disordered" evidence="2">
    <location>
        <begin position="1"/>
        <end position="28"/>
    </location>
</feature>
<feature type="compositionally biased region" description="Basic and acidic residues" evidence="2">
    <location>
        <begin position="1"/>
        <end position="25"/>
    </location>
</feature>
<accession>B2S209</accession>
<organism>
    <name type="scientific">Treponema pallidum subsp. pallidum (strain SS14)</name>
    <dbReference type="NCBI Taxonomy" id="455434"/>
    <lineage>
        <taxon>Bacteria</taxon>
        <taxon>Pseudomonadati</taxon>
        <taxon>Spirochaetota</taxon>
        <taxon>Spirochaetia</taxon>
        <taxon>Spirochaetales</taxon>
        <taxon>Treponemataceae</taxon>
        <taxon>Treponema</taxon>
    </lineage>
</organism>
<keyword id="KW-0687">Ribonucleoprotein</keyword>
<keyword id="KW-0689">Ribosomal protein</keyword>
<keyword id="KW-0694">RNA-binding</keyword>
<keyword id="KW-0699">rRNA-binding</keyword>
<protein>
    <recommendedName>
        <fullName evidence="1">Small ribosomal subunit protein bS18</fullName>
    </recommendedName>
    <alternativeName>
        <fullName evidence="3">30S ribosomal protein S18</fullName>
    </alternativeName>
</protein>
<reference key="1">
    <citation type="journal article" date="2008" name="BMC Microbiol.">
        <title>Complete genome sequence of Treponema pallidum ssp. pallidum strain SS14 determined with oligonucleotide arrays.</title>
        <authorList>
            <person name="Matejkova P."/>
            <person name="Strouhal M."/>
            <person name="Smajs D."/>
            <person name="Norris S.J."/>
            <person name="Palzkill T."/>
            <person name="Petrosino J.F."/>
            <person name="Sodergren E."/>
            <person name="Norton J.E."/>
            <person name="Singh J."/>
            <person name="Richmond T.A."/>
            <person name="Molla M.N."/>
            <person name="Albert T.J."/>
            <person name="Weinstock G.M."/>
        </authorList>
    </citation>
    <scope>NUCLEOTIDE SEQUENCE [LARGE SCALE GENOMIC DNA]</scope>
    <source>
        <strain>SS14</strain>
    </source>
</reference>
<name>RS18_TREPS</name>
<comment type="function">
    <text evidence="1">Binds as a heterodimer with protein bS6 to the central domain of the 16S rRNA, where it helps stabilize the platform of the 30S subunit.</text>
</comment>
<comment type="subunit">
    <text evidence="1">Part of the 30S ribosomal subunit. Forms a tight heterodimer with protein bS6.</text>
</comment>
<comment type="similarity">
    <text evidence="1">Belongs to the bacterial ribosomal protein bS18 family.</text>
</comment>
<sequence>MAEDHPSVDLDTHLSSPRESEESAPKKNRQFYRKKVCRFCTQKLLADYKDPDTLRRFITERGKILPRRITGTCAKHQRRVALEVKRSRAVALLPFVLTE</sequence>
<dbReference type="EMBL" id="CP000805">
    <property type="protein sequence ID" value="ACD70488.1"/>
    <property type="molecule type" value="Genomic_DNA"/>
</dbReference>
<dbReference type="RefSeq" id="WP_010881510.1">
    <property type="nucleotide sequence ID" value="NC_021508.1"/>
</dbReference>
<dbReference type="SMR" id="B2S209"/>
<dbReference type="GeneID" id="93875856"/>
<dbReference type="KEGG" id="tpp:TPASS_0061"/>
<dbReference type="PATRIC" id="fig|455434.6.peg.59"/>
<dbReference type="Proteomes" id="UP000001202">
    <property type="component" value="Chromosome"/>
</dbReference>
<dbReference type="GO" id="GO:0022627">
    <property type="term" value="C:cytosolic small ribosomal subunit"/>
    <property type="evidence" value="ECO:0007669"/>
    <property type="project" value="TreeGrafter"/>
</dbReference>
<dbReference type="GO" id="GO:0070181">
    <property type="term" value="F:small ribosomal subunit rRNA binding"/>
    <property type="evidence" value="ECO:0007669"/>
    <property type="project" value="TreeGrafter"/>
</dbReference>
<dbReference type="GO" id="GO:0003735">
    <property type="term" value="F:structural constituent of ribosome"/>
    <property type="evidence" value="ECO:0007669"/>
    <property type="project" value="InterPro"/>
</dbReference>
<dbReference type="GO" id="GO:0006412">
    <property type="term" value="P:translation"/>
    <property type="evidence" value="ECO:0007669"/>
    <property type="project" value="UniProtKB-UniRule"/>
</dbReference>
<dbReference type="Gene3D" id="4.10.640.10">
    <property type="entry name" value="Ribosomal protein S18"/>
    <property type="match status" value="1"/>
</dbReference>
<dbReference type="HAMAP" id="MF_00270">
    <property type="entry name" value="Ribosomal_bS18"/>
    <property type="match status" value="1"/>
</dbReference>
<dbReference type="InterPro" id="IPR001648">
    <property type="entry name" value="Ribosomal_bS18"/>
</dbReference>
<dbReference type="InterPro" id="IPR036870">
    <property type="entry name" value="Ribosomal_bS18_sf"/>
</dbReference>
<dbReference type="NCBIfam" id="TIGR00165">
    <property type="entry name" value="S18"/>
    <property type="match status" value="1"/>
</dbReference>
<dbReference type="PANTHER" id="PTHR13479">
    <property type="entry name" value="30S RIBOSOMAL PROTEIN S18"/>
    <property type="match status" value="1"/>
</dbReference>
<dbReference type="PANTHER" id="PTHR13479:SF40">
    <property type="entry name" value="SMALL RIBOSOMAL SUBUNIT PROTEIN BS18M"/>
    <property type="match status" value="1"/>
</dbReference>
<dbReference type="Pfam" id="PF01084">
    <property type="entry name" value="Ribosomal_S18"/>
    <property type="match status" value="1"/>
</dbReference>
<dbReference type="PRINTS" id="PR00974">
    <property type="entry name" value="RIBOSOMALS18"/>
</dbReference>
<dbReference type="SUPFAM" id="SSF46911">
    <property type="entry name" value="Ribosomal protein S18"/>
    <property type="match status" value="1"/>
</dbReference>
<evidence type="ECO:0000255" key="1">
    <source>
        <dbReference type="HAMAP-Rule" id="MF_00270"/>
    </source>
</evidence>
<evidence type="ECO:0000256" key="2">
    <source>
        <dbReference type="SAM" id="MobiDB-lite"/>
    </source>
</evidence>
<evidence type="ECO:0000305" key="3"/>